<protein>
    <recommendedName>
        <fullName evidence="1">Photosystem II reaction center protein T</fullName>
        <shortName evidence="1">PSII-T</shortName>
    </recommendedName>
</protein>
<proteinExistence type="inferred from homology"/>
<geneLocation type="chloroplast"/>
<gene>
    <name evidence="1" type="primary">psbT</name>
</gene>
<comment type="function">
    <text evidence="1">Found at the monomer-monomer interface of the photosystem II (PS II) dimer, plays a role in assembly and dimerization of PSII. PSII is a light-driven water plastoquinone oxidoreductase, using light energy to abstract electrons from H(2)O, generating a proton gradient subsequently used for ATP formation.</text>
</comment>
<comment type="subunit">
    <text evidence="1">PSII is composed of 1 copy each of membrane proteins PsbA, PsbB, PsbC, PsbD, PsbE, PsbF, PsbH, PsbI, PsbJ, PsbK, PsbL, PsbM, PsbT, PsbY, PsbZ, Psb30/Ycf12, at least 3 peripheral proteins of the oxygen-evolving complex and a large number of cofactors. It forms dimeric complexes.</text>
</comment>
<comment type="subcellular location">
    <subcellularLocation>
        <location evidence="1">Plastid</location>
        <location evidence="1">Chloroplast thylakoid membrane</location>
        <topology evidence="1">Single-pass membrane protein</topology>
    </subcellularLocation>
</comment>
<comment type="similarity">
    <text evidence="1">Belongs to the PsbT family.</text>
</comment>
<accession>Q8HS29</accession>
<evidence type="ECO:0000255" key="1">
    <source>
        <dbReference type="HAMAP-Rule" id="MF_00808"/>
    </source>
</evidence>
<name>PSBT_MAGST</name>
<reference key="1">
    <citation type="submission" date="2000-02" db="EMBL/GenBank/DDBJ databases">
        <authorList>
            <person name="Graham S.W."/>
            <person name="Reeves P.A."/>
            <person name="Burns A."/>
            <person name="Olmstead R.G."/>
        </authorList>
    </citation>
    <scope>NUCLEOTIDE SEQUENCE [GENOMIC DNA]</scope>
</reference>
<keyword id="KW-0150">Chloroplast</keyword>
<keyword id="KW-0472">Membrane</keyword>
<keyword id="KW-0602">Photosynthesis</keyword>
<keyword id="KW-0604">Photosystem II</keyword>
<keyword id="KW-0934">Plastid</keyword>
<keyword id="KW-0793">Thylakoid</keyword>
<keyword id="KW-0812">Transmembrane</keyword>
<keyword id="KW-1133">Transmembrane helix</keyword>
<dbReference type="EMBL" id="AY007466">
    <property type="protein sequence ID" value="AAG12376.1"/>
    <property type="molecule type" value="Genomic_DNA"/>
</dbReference>
<dbReference type="SMR" id="Q8HS29"/>
<dbReference type="GO" id="GO:0009535">
    <property type="term" value="C:chloroplast thylakoid membrane"/>
    <property type="evidence" value="ECO:0007669"/>
    <property type="project" value="UniProtKB-SubCell"/>
</dbReference>
<dbReference type="GO" id="GO:0009539">
    <property type="term" value="C:photosystem II reaction center"/>
    <property type="evidence" value="ECO:0007669"/>
    <property type="project" value="InterPro"/>
</dbReference>
<dbReference type="GO" id="GO:0015979">
    <property type="term" value="P:photosynthesis"/>
    <property type="evidence" value="ECO:0007669"/>
    <property type="project" value="UniProtKB-UniRule"/>
</dbReference>
<dbReference type="HAMAP" id="MF_00808">
    <property type="entry name" value="PSII_PsbT"/>
    <property type="match status" value="1"/>
</dbReference>
<dbReference type="InterPro" id="IPR001743">
    <property type="entry name" value="PSII_PsbT"/>
</dbReference>
<dbReference type="InterPro" id="IPR037268">
    <property type="entry name" value="PSII_PsbT_sf"/>
</dbReference>
<dbReference type="PANTHER" id="PTHR36411">
    <property type="match status" value="1"/>
</dbReference>
<dbReference type="PANTHER" id="PTHR36411:SF2">
    <property type="entry name" value="PHOTOSYSTEM II REACTION CENTER PROTEIN T"/>
    <property type="match status" value="1"/>
</dbReference>
<dbReference type="Pfam" id="PF01405">
    <property type="entry name" value="PsbT"/>
    <property type="match status" value="1"/>
</dbReference>
<dbReference type="SUPFAM" id="SSF161029">
    <property type="entry name" value="Photosystem II reaction center protein T, PsbT"/>
    <property type="match status" value="1"/>
</dbReference>
<feature type="chain" id="PRO_0000217947" description="Photosystem II reaction center protein T">
    <location>
        <begin position="1"/>
        <end position="35"/>
    </location>
</feature>
<feature type="transmembrane region" description="Helical" evidence="1">
    <location>
        <begin position="3"/>
        <end position="23"/>
    </location>
</feature>
<sequence length="35" mass="4077">MEALVYTFLLVSTLGIIFFAIFFREPPKVPTKKMK</sequence>
<organism>
    <name type="scientific">Magnolia stellata</name>
    <name type="common">Star magnolia</name>
    <name type="synonym">Buergeria stellata</name>
    <dbReference type="NCBI Taxonomy" id="54733"/>
    <lineage>
        <taxon>Eukaryota</taxon>
        <taxon>Viridiplantae</taxon>
        <taxon>Streptophyta</taxon>
        <taxon>Embryophyta</taxon>
        <taxon>Tracheophyta</taxon>
        <taxon>Spermatophyta</taxon>
        <taxon>Magnoliopsida</taxon>
        <taxon>Magnoliidae</taxon>
        <taxon>Magnoliales</taxon>
        <taxon>Magnoliaceae</taxon>
        <taxon>Magnolia</taxon>
    </lineage>
</organism>